<protein>
    <recommendedName>
        <fullName evidence="8">Kappa-theraphotoxin-Cg1a 2</fullName>
        <shortName evidence="8">Kappa-TRTX-Cg1a</shortName>
    </recommendedName>
    <alternativeName>
        <fullName>Jingzhaotoxin-11.2</fullName>
        <shortName>JZTX-11.2</shortName>
    </alternativeName>
    <alternativeName>
        <fullName evidence="5">Jingzhaotoxin-XI.2</fullName>
        <shortName evidence="5 7">JZTX-XI.2</shortName>
    </alternativeName>
    <alternativeName>
        <fullName evidence="6">Peptide F4-13.64</fullName>
    </alternativeName>
</protein>
<name>JZ11B_CHIGU</name>
<feature type="signal peptide" evidence="1">
    <location>
        <begin position="1"/>
        <end position="21"/>
    </location>
</feature>
<feature type="propeptide" id="PRO_0000398407" evidence="2 3">
    <location>
        <begin position="22"/>
        <end position="50"/>
    </location>
</feature>
<feature type="peptide" id="PRO_0000398408" description="Kappa-theraphotoxin-Cg1a 2" evidence="2 3 4">
    <location>
        <begin position="51"/>
        <end position="84"/>
    </location>
</feature>
<feature type="modified residue" description="Phenylalanine amide" evidence="2">
    <location>
        <position position="84"/>
    </location>
</feature>
<feature type="disulfide bond" evidence="2">
    <location>
        <begin position="52"/>
        <end position="66"/>
    </location>
</feature>
<feature type="disulfide bond" evidence="2">
    <location>
        <begin position="59"/>
        <end position="71"/>
    </location>
</feature>
<feature type="disulfide bond" evidence="2">
    <location>
        <begin position="65"/>
        <end position="78"/>
    </location>
</feature>
<sequence>MKVSVVITLAVLGVMFVWASAAELEERGSDQRDSPAWLKSMERIFQSEERECRKMFGGCSVDSDCCAHLGCKPTLKYCAWDGTFGK</sequence>
<accession>B1P1E1</accession>
<reference key="1">
    <citation type="journal article" date="2008" name="Cell. Mol. Life Sci.">
        <title>Molecular diversity and evolution of cystine knot toxins of the tarantula Chilobrachys jingzhao.</title>
        <authorList>
            <person name="Chen J."/>
            <person name="Deng M."/>
            <person name="He Q."/>
            <person name="Meng E."/>
            <person name="Jiang L."/>
            <person name="Liao Z."/>
            <person name="Rong M."/>
            <person name="Liang S."/>
        </authorList>
    </citation>
    <scope>NUCLEOTIDE SEQUENCE [LARGE SCALE MRNA]</scope>
    <source>
        <tissue>Venom gland</tissue>
    </source>
</reference>
<reference key="2">
    <citation type="journal article" date="2007" name="Proteomics">
        <title>Proteomic and peptidomic analysis of the venom from Chinese tarantula Chilobrachys jingzhao.</title>
        <authorList>
            <person name="Liao Z."/>
            <person name="Cao J."/>
            <person name="Li S."/>
            <person name="Yan X."/>
            <person name="Hu W."/>
            <person name="He Q."/>
            <person name="Chen J."/>
            <person name="Tang J."/>
            <person name="Xie J."/>
            <person name="Liang S."/>
        </authorList>
    </citation>
    <scope>PROTEIN SEQUENCE OF 51-84</scope>
    <scope>SUBCELLULAR LOCATION</scope>
    <source>
        <tissue>Venom</tissue>
    </source>
</reference>
<reference key="3">
    <citation type="journal article" date="2006" name="Biochemistry">
        <title>Solution structure and functional characterization of Jingzhaotoxin-XI: a novel gating modifier of both potassium and sodium channels.</title>
        <authorList>
            <person name="Liao Z."/>
            <person name="Yuan C."/>
            <person name="Deng M."/>
            <person name="Li J."/>
            <person name="Chen J."/>
            <person name="Yang Y."/>
            <person name="Hu W."/>
            <person name="Liang S."/>
        </authorList>
    </citation>
    <scope>PROTEIN SEQUENCE OF 51-84</scope>
    <scope>SUBCELLULAR LOCATION</scope>
    <scope>FUNCTION</scope>
    <scope>STRUCTURE BY NMR OF 51-84</scope>
    <scope>AMIDATION AT PHE-84</scope>
    <scope>DISULFIDE BONDS</scope>
    <scope>MASS SPECTROMETRY</scope>
    <source>
        <tissue>Venom</tissue>
    </source>
</reference>
<reference key="4">
    <citation type="journal article" date="2014" name="Toxicon">
        <title>The tarantula toxin jingzhaotoxin-XI (kappa-theraphotoxin-Cj1a) regulates the activation and inactivation of the voltage-gated sodium channel Nav1.5.</title>
        <authorList>
            <person name="Tang C."/>
            <person name="Zhou X."/>
            <person name="Huang Y."/>
            <person name="Zhang Y."/>
            <person name="Hu Z."/>
            <person name="Wang M."/>
            <person name="Chen P."/>
            <person name="Liu Z."/>
            <person name="Liang S."/>
        </authorList>
    </citation>
    <scope>PROTEIN SEQUENCE OF 51-84</scope>
    <scope>FUNCTION</scope>
    <scope>SUBCELLULAR LOCATION</scope>
    <scope>DISULFIDE BOND</scope>
    <source>
        <tissue>Venom</tissue>
    </source>
</reference>
<dbReference type="EMBL" id="EU233872">
    <property type="protein sequence ID" value="ABY71691.1"/>
    <property type="molecule type" value="mRNA"/>
</dbReference>
<dbReference type="SMR" id="B1P1E1"/>
<dbReference type="ArachnoServer" id="AS000043">
    <property type="toxin name" value="kappa-theraphotoxin-Cg1a"/>
</dbReference>
<dbReference type="GO" id="GO:0005576">
    <property type="term" value="C:extracellular region"/>
    <property type="evidence" value="ECO:0007669"/>
    <property type="project" value="UniProtKB-SubCell"/>
</dbReference>
<dbReference type="GO" id="GO:0008200">
    <property type="term" value="F:ion channel inhibitor activity"/>
    <property type="evidence" value="ECO:0007669"/>
    <property type="project" value="InterPro"/>
</dbReference>
<dbReference type="GO" id="GO:0015459">
    <property type="term" value="F:potassium channel regulator activity"/>
    <property type="evidence" value="ECO:0007669"/>
    <property type="project" value="UniProtKB-KW"/>
</dbReference>
<dbReference type="GO" id="GO:0017080">
    <property type="term" value="F:sodium channel regulator activity"/>
    <property type="evidence" value="ECO:0007669"/>
    <property type="project" value="UniProtKB-KW"/>
</dbReference>
<dbReference type="GO" id="GO:0090729">
    <property type="term" value="F:toxin activity"/>
    <property type="evidence" value="ECO:0007669"/>
    <property type="project" value="UniProtKB-KW"/>
</dbReference>
<dbReference type="InterPro" id="IPR011696">
    <property type="entry name" value="Huwentoxin-1"/>
</dbReference>
<dbReference type="Pfam" id="PF07740">
    <property type="entry name" value="Toxin_12"/>
    <property type="match status" value="1"/>
</dbReference>
<dbReference type="SUPFAM" id="SSF57059">
    <property type="entry name" value="omega toxin-like"/>
    <property type="match status" value="1"/>
</dbReference>
<comment type="function">
    <text evidence="2 4">This toxin acts as a voltage-dependent gating-modifier (PubMed:25240294). It inhibits the sodium conductance (IC(50)=124 nM) and slows the fast inactivation (EC(50)=1180 nM) of Nav1.5/SCN5A (PubMed:17176080, PubMed:25240294). It significantly shifts the activation to more depolarized voltages and decreases the deactivation of Nav1.5 currents upon extreme depolarization, but only slightly affects voltage-dependence of steady-state inactivation (PubMed:17176080, PubMed:25240294). In addition, this toxin causes an approximately five-fold decrease in the rate of recovery from inactivation and an approximately 1.9-fold reduction in the closed-state inactivation rate (PubMed:25240294). This toxin integrates the functions of site 3 toxins (alpha-scorpion toxins) with site 4 toxins (beta-scorpion and spider toxins) by targeting multiple sites on Nav1.5 (PubMed:25240294). Also shows inhibition of voltage-gated potassium channels (5 uM completely inhibits Kv2.1/KCNB1, whereas 5 uM moderately inhibits Kv4.2/KCND2 Kv4.1/KCND1 channels) (PubMed:17176080).</text>
</comment>
<comment type="subcellular location">
    <subcellularLocation>
        <location evidence="2 3 4">Secreted</location>
    </subcellularLocation>
</comment>
<comment type="tissue specificity">
    <text evidence="10 11">Expressed by the venom gland.</text>
</comment>
<comment type="domain">
    <text evidence="4">The presence of a 'disulfide through disulfide knot' structurally defines this protein as a knottin.</text>
</comment>
<comment type="mass spectrometry">
    <text>Monoisotopic mass.</text>
</comment>
<comment type="miscellaneous">
    <text evidence="10">Negative results: does not show effect on Kv1.1/KCNA1, Kv1.2/KCNA2, Kv1.3/KCNA3, Kv1.4/KCNA4, Kv3.1/KCNC1 (all expressed in oocytes), voltage-gated sodium channels (Nav1/SCN) (from DRG neurons), and in a range of voltage-gated calcium channels (expressed in rat DRG neurons) (PubMed:17176080). In addition, does not show significant toxic symptoms when injected into mice and into cockroaches (PubMed:17176080).</text>
</comment>
<comment type="similarity">
    <text evidence="9">Belongs to the neurotoxin 10 (Hwtx-1) family. 28 (Jztx-11) subfamily.</text>
</comment>
<comment type="caution">
    <text evidence="9">Several genes are coding for this toxin for which the structure by NMR has been determined. The cross-references to PDB and additional information can be found in entry AC P0C247.</text>
</comment>
<proteinExistence type="evidence at protein level"/>
<evidence type="ECO:0000255" key="1"/>
<evidence type="ECO:0000269" key="2">
    <source>
    </source>
</evidence>
<evidence type="ECO:0000269" key="3">
    <source>
    </source>
</evidence>
<evidence type="ECO:0000269" key="4">
    <source>
    </source>
</evidence>
<evidence type="ECO:0000303" key="5">
    <source>
    </source>
</evidence>
<evidence type="ECO:0000303" key="6">
    <source>
    </source>
</evidence>
<evidence type="ECO:0000303" key="7">
    <source>
    </source>
</evidence>
<evidence type="ECO:0000303" key="8">
    <source>
    </source>
</evidence>
<evidence type="ECO:0000305" key="9"/>
<evidence type="ECO:0000305" key="10">
    <source>
    </source>
</evidence>
<evidence type="ECO:0000305" key="11">
    <source>
    </source>
</evidence>
<organism>
    <name type="scientific">Chilobrachys guangxiensis</name>
    <name type="common">Chinese earth tiger tarantula</name>
    <name type="synonym">Chilobrachys jingzhao</name>
    <dbReference type="NCBI Taxonomy" id="278060"/>
    <lineage>
        <taxon>Eukaryota</taxon>
        <taxon>Metazoa</taxon>
        <taxon>Ecdysozoa</taxon>
        <taxon>Arthropoda</taxon>
        <taxon>Chelicerata</taxon>
        <taxon>Arachnida</taxon>
        <taxon>Araneae</taxon>
        <taxon>Mygalomorphae</taxon>
        <taxon>Theraphosidae</taxon>
        <taxon>Chilobrachys</taxon>
    </lineage>
</organism>
<keyword id="KW-0027">Amidation</keyword>
<keyword id="KW-0903">Direct protein sequencing</keyword>
<keyword id="KW-1015">Disulfide bond</keyword>
<keyword id="KW-0872">Ion channel impairing toxin</keyword>
<keyword id="KW-0960">Knottin</keyword>
<keyword id="KW-0632">Potassium channel impairing toxin</keyword>
<keyword id="KW-0964">Secreted</keyword>
<keyword id="KW-0732">Signal</keyword>
<keyword id="KW-0800">Toxin</keyword>
<keyword id="KW-1220">Voltage-gated potassium channel impairing toxin</keyword>
<keyword id="KW-0738">Voltage-gated sodium channel impairing toxin</keyword>